<sequence length="316" mass="34950">MRKRARIIYNPTSGKELFKRVLPDALIKLEKAGYETSAYATEKIGDATFEAERALESEYDLLIAAGGDGTLNEVVNGIAEQPNRPKLGVIPMGTVNDFGRALHLPSDIMGAIDVIIDGHTTKVDIGKMNNRYFINLAAGGKLTQVSYETPSKLKSIVGPFAYYIKGFEMLPQMKAVDVRIEYDDNIFQGEALLFLLGLTNSMAGFEKLVPDAKLDDGYFTLIIVEKANLAELGHIMTLASRGEHTKHPKVIYAKAKSINISSFTDMQLNVDGEYGGKLPANFLNLEQHIEIFTPKDVFNEELLENDTITDITPDKQ</sequence>
<protein>
    <recommendedName>
        <fullName>Diacylglycerol kinase</fullName>
        <shortName>DAG kinase</shortName>
        <shortName>DAGK</shortName>
        <ecNumber evidence="1">2.7.1.107</ecNumber>
    </recommendedName>
</protein>
<comment type="function">
    <text evidence="1">Catalyzes the phosphorylation of diacylglycerol (DAG) into phosphatidic acid. Is a key enzyme involved in the production of lipoteichoic acid by reintroducing DAG formed from the breakdown of membrane phospholipids into the phosphatidylglycerol biosynthetic pathway.</text>
</comment>
<comment type="catalytic activity">
    <reaction evidence="1">
        <text>a 1,2-diacyl-sn-glycerol + ATP = a 1,2-diacyl-sn-glycero-3-phosphate + ADP + H(+)</text>
        <dbReference type="Rhea" id="RHEA:10272"/>
        <dbReference type="ChEBI" id="CHEBI:15378"/>
        <dbReference type="ChEBI" id="CHEBI:17815"/>
        <dbReference type="ChEBI" id="CHEBI:30616"/>
        <dbReference type="ChEBI" id="CHEBI:58608"/>
        <dbReference type="ChEBI" id="CHEBI:456216"/>
        <dbReference type="EC" id="2.7.1.107"/>
    </reaction>
</comment>
<comment type="cofactor">
    <cofactor evidence="1">
        <name>Mg(2+)</name>
        <dbReference type="ChEBI" id="CHEBI:18420"/>
    </cofactor>
    <text evidence="1">Binds 1 Mg(2+) ion per subunit. This ion appears to have a structural role and is required for catalytic activity.</text>
</comment>
<comment type="subunit">
    <text evidence="1">Homodimer.</text>
</comment>
<comment type="similarity">
    <text evidence="3">Belongs to the diacylglycerol/lipid kinase family.</text>
</comment>
<name>DAGK_STAES</name>
<gene>
    <name type="primary">dagK</name>
    <name type="ordered locus">SE_1583</name>
</gene>
<keyword id="KW-0067">ATP-binding</keyword>
<keyword id="KW-0418">Kinase</keyword>
<keyword id="KW-0444">Lipid biosynthesis</keyword>
<keyword id="KW-0443">Lipid metabolism</keyword>
<keyword id="KW-0460">Magnesium</keyword>
<keyword id="KW-0479">Metal-binding</keyword>
<keyword id="KW-0547">Nucleotide-binding</keyword>
<keyword id="KW-0594">Phospholipid biosynthesis</keyword>
<keyword id="KW-1208">Phospholipid metabolism</keyword>
<keyword id="KW-0808">Transferase</keyword>
<feature type="chain" id="PRO_0000386501" description="Diacylglycerol kinase">
    <location>
        <begin position="1"/>
        <end position="316"/>
    </location>
</feature>
<feature type="domain" description="DAGKc" evidence="2">
    <location>
        <begin position="1"/>
        <end position="132"/>
    </location>
</feature>
<feature type="active site" description="Proton acceptor" evidence="1">
    <location>
        <position position="273"/>
    </location>
</feature>
<feature type="binding site" evidence="2">
    <location>
        <begin position="10"/>
        <end position="14"/>
    </location>
    <ligand>
        <name>ATP</name>
        <dbReference type="ChEBI" id="CHEBI:30616"/>
    </ligand>
</feature>
<feature type="binding site" evidence="2">
    <location>
        <position position="41"/>
    </location>
    <ligand>
        <name>ATP</name>
        <dbReference type="ChEBI" id="CHEBI:30616"/>
    </ligand>
</feature>
<feature type="binding site" evidence="2">
    <location>
        <begin position="67"/>
        <end position="73"/>
    </location>
    <ligand>
        <name>ATP</name>
        <dbReference type="ChEBI" id="CHEBI:30616"/>
    </ligand>
</feature>
<feature type="binding site" evidence="2">
    <location>
        <position position="94"/>
    </location>
    <ligand>
        <name>ATP</name>
        <dbReference type="ChEBI" id="CHEBI:30616"/>
    </ligand>
</feature>
<feature type="binding site" evidence="1">
    <location>
        <position position="213"/>
    </location>
    <ligand>
        <name>Mg(2+)</name>
        <dbReference type="ChEBI" id="CHEBI:18420"/>
    </ligand>
</feature>
<feature type="binding site" evidence="1">
    <location>
        <position position="216"/>
    </location>
    <ligand>
        <name>Mg(2+)</name>
        <dbReference type="ChEBI" id="CHEBI:18420"/>
    </ligand>
</feature>
<feature type="binding site" evidence="1">
    <location>
        <position position="218"/>
    </location>
    <ligand>
        <name>Mg(2+)</name>
        <dbReference type="ChEBI" id="CHEBI:18420"/>
    </ligand>
</feature>
<organism>
    <name type="scientific">Staphylococcus epidermidis (strain ATCC 12228 / FDA PCI 1200)</name>
    <dbReference type="NCBI Taxonomy" id="176280"/>
    <lineage>
        <taxon>Bacteria</taxon>
        <taxon>Bacillati</taxon>
        <taxon>Bacillota</taxon>
        <taxon>Bacilli</taxon>
        <taxon>Bacillales</taxon>
        <taxon>Staphylococcaceae</taxon>
        <taxon>Staphylococcus</taxon>
    </lineage>
</organism>
<reference key="1">
    <citation type="journal article" date="2003" name="Mol. Microbiol.">
        <title>Genome-based analysis of virulence genes in a non-biofilm-forming Staphylococcus epidermidis strain (ATCC 12228).</title>
        <authorList>
            <person name="Zhang Y.-Q."/>
            <person name="Ren S.-X."/>
            <person name="Li H.-L."/>
            <person name="Wang Y.-X."/>
            <person name="Fu G."/>
            <person name="Yang J."/>
            <person name="Qin Z.-Q."/>
            <person name="Miao Y.-G."/>
            <person name="Wang W.-Y."/>
            <person name="Chen R.-S."/>
            <person name="Shen Y."/>
            <person name="Chen Z."/>
            <person name="Yuan Z.-H."/>
            <person name="Zhao G.-P."/>
            <person name="Qu D."/>
            <person name="Danchin A."/>
            <person name="Wen Y.-M."/>
        </authorList>
    </citation>
    <scope>NUCLEOTIDE SEQUENCE [LARGE SCALE GENOMIC DNA]</scope>
    <source>
        <strain>ATCC 12228 / FDA PCI 1200</strain>
    </source>
</reference>
<proteinExistence type="inferred from homology"/>
<accession>Q8CRU5</accession>
<evidence type="ECO:0000250" key="1">
    <source>
        <dbReference type="UniProtKB" id="Q6GFF9"/>
    </source>
</evidence>
<evidence type="ECO:0000255" key="2">
    <source>
        <dbReference type="PROSITE-ProRule" id="PRU00783"/>
    </source>
</evidence>
<evidence type="ECO:0000305" key="3"/>
<dbReference type="EC" id="2.7.1.107" evidence="1"/>
<dbReference type="EMBL" id="AE015929">
    <property type="protein sequence ID" value="AAO05182.1"/>
    <property type="molecule type" value="Genomic_DNA"/>
</dbReference>
<dbReference type="RefSeq" id="NP_765138.1">
    <property type="nucleotide sequence ID" value="NC_004461.1"/>
</dbReference>
<dbReference type="RefSeq" id="WP_002484891.1">
    <property type="nucleotide sequence ID" value="NZ_WBME01000010.1"/>
</dbReference>
<dbReference type="SMR" id="Q8CRU5"/>
<dbReference type="KEGG" id="sep:SE_1583"/>
<dbReference type="PATRIC" id="fig|176280.10.peg.1547"/>
<dbReference type="eggNOG" id="COG1597">
    <property type="taxonomic scope" value="Bacteria"/>
</dbReference>
<dbReference type="HOGENOM" id="CLU_045532_1_0_9"/>
<dbReference type="OrthoDB" id="142078at2"/>
<dbReference type="Proteomes" id="UP000001411">
    <property type="component" value="Chromosome"/>
</dbReference>
<dbReference type="GO" id="GO:0005886">
    <property type="term" value="C:plasma membrane"/>
    <property type="evidence" value="ECO:0007669"/>
    <property type="project" value="TreeGrafter"/>
</dbReference>
<dbReference type="GO" id="GO:0005524">
    <property type="term" value="F:ATP binding"/>
    <property type="evidence" value="ECO:0007669"/>
    <property type="project" value="UniProtKB-KW"/>
</dbReference>
<dbReference type="GO" id="GO:0004143">
    <property type="term" value="F:ATP-dependent diacylglycerol kinase activity"/>
    <property type="evidence" value="ECO:0007669"/>
    <property type="project" value="UniProtKB-EC"/>
</dbReference>
<dbReference type="GO" id="GO:0046872">
    <property type="term" value="F:metal ion binding"/>
    <property type="evidence" value="ECO:0007669"/>
    <property type="project" value="UniProtKB-KW"/>
</dbReference>
<dbReference type="GO" id="GO:0008654">
    <property type="term" value="P:phospholipid biosynthetic process"/>
    <property type="evidence" value="ECO:0007669"/>
    <property type="project" value="UniProtKB-KW"/>
</dbReference>
<dbReference type="FunFam" id="2.60.200.40:FF:000015">
    <property type="entry name" value="Diacylglycerol kinase"/>
    <property type="match status" value="1"/>
</dbReference>
<dbReference type="FunFam" id="3.40.50.10330:FF:000008">
    <property type="entry name" value="Probable lipid kinase YegS"/>
    <property type="match status" value="1"/>
</dbReference>
<dbReference type="Gene3D" id="2.60.200.40">
    <property type="match status" value="1"/>
</dbReference>
<dbReference type="Gene3D" id="3.40.50.10330">
    <property type="entry name" value="Probable inorganic polyphosphate/atp-NAD kinase, domain 1"/>
    <property type="match status" value="1"/>
</dbReference>
<dbReference type="InterPro" id="IPR017438">
    <property type="entry name" value="ATP-NAD_kinase_N"/>
</dbReference>
<dbReference type="InterPro" id="IPR005218">
    <property type="entry name" value="Diacylglycerol/lipid_kinase"/>
</dbReference>
<dbReference type="InterPro" id="IPR001206">
    <property type="entry name" value="Diacylglycerol_kinase_cat_dom"/>
</dbReference>
<dbReference type="InterPro" id="IPR050187">
    <property type="entry name" value="Lipid_Phosphate_FormReg"/>
</dbReference>
<dbReference type="InterPro" id="IPR016064">
    <property type="entry name" value="NAD/diacylglycerol_kinase_sf"/>
</dbReference>
<dbReference type="InterPro" id="IPR045540">
    <property type="entry name" value="YegS/DAGK_C"/>
</dbReference>
<dbReference type="NCBIfam" id="NF009603">
    <property type="entry name" value="PRK13055.1"/>
    <property type="match status" value="1"/>
</dbReference>
<dbReference type="NCBIfam" id="NF009874">
    <property type="entry name" value="PRK13337.1"/>
    <property type="match status" value="1"/>
</dbReference>
<dbReference type="NCBIfam" id="TIGR00147">
    <property type="entry name" value="YegS/Rv2252/BmrU family lipid kinase"/>
    <property type="match status" value="1"/>
</dbReference>
<dbReference type="PANTHER" id="PTHR12358:SF106">
    <property type="entry name" value="LIPID KINASE YEGS"/>
    <property type="match status" value="1"/>
</dbReference>
<dbReference type="PANTHER" id="PTHR12358">
    <property type="entry name" value="SPHINGOSINE KINASE"/>
    <property type="match status" value="1"/>
</dbReference>
<dbReference type="Pfam" id="PF00781">
    <property type="entry name" value="DAGK_cat"/>
    <property type="match status" value="1"/>
</dbReference>
<dbReference type="Pfam" id="PF19279">
    <property type="entry name" value="YegS_C"/>
    <property type="match status" value="1"/>
</dbReference>
<dbReference type="SMART" id="SM00046">
    <property type="entry name" value="DAGKc"/>
    <property type="match status" value="1"/>
</dbReference>
<dbReference type="SUPFAM" id="SSF111331">
    <property type="entry name" value="NAD kinase/diacylglycerol kinase-like"/>
    <property type="match status" value="1"/>
</dbReference>
<dbReference type="PROSITE" id="PS50146">
    <property type="entry name" value="DAGK"/>
    <property type="match status" value="1"/>
</dbReference>